<accession>Q99MX0</accession>
<accession>B1AYP0</accession>
<accession>Q684Q5</accession>
<accession>Q8CDU7</accession>
<feature type="chain" id="PRO_0000271265" description="Transketolase-like protein 1">
    <location>
        <begin position="1"/>
        <end position="595"/>
    </location>
</feature>
<feature type="active site" description="Proton donor" evidence="3">
    <location>
        <position position="339"/>
    </location>
</feature>
<feature type="binding site" evidence="2">
    <location>
        <begin position="93"/>
        <end position="95"/>
    </location>
    <ligand>
        <name>thiamine diphosphate</name>
        <dbReference type="ChEBI" id="CHEBI:58937"/>
    </ligand>
</feature>
<feature type="binding site" evidence="3">
    <location>
        <position position="125"/>
    </location>
    <ligand>
        <name>Mg(2+)</name>
        <dbReference type="ChEBI" id="CHEBI:18420"/>
    </ligand>
</feature>
<feature type="binding site" evidence="3">
    <location>
        <position position="155"/>
    </location>
    <ligand>
        <name>Mg(2+)</name>
        <dbReference type="ChEBI" id="CHEBI:18420"/>
    </ligand>
</feature>
<feature type="binding site" evidence="2">
    <location>
        <position position="155"/>
    </location>
    <ligand>
        <name>thiamine diphosphate</name>
        <dbReference type="ChEBI" id="CHEBI:58937"/>
    </ligand>
</feature>
<feature type="binding site" evidence="3">
    <location>
        <position position="157"/>
    </location>
    <ligand>
        <name>Mg(2+)</name>
        <dbReference type="ChEBI" id="CHEBI:18420"/>
    </ligand>
</feature>
<feature type="binding site" evidence="1">
    <location>
        <position position="217"/>
    </location>
    <ligand>
        <name>thiamine diphosphate</name>
        <dbReference type="ChEBI" id="CHEBI:58937"/>
    </ligand>
</feature>
<feature type="binding site" evidence="2">
    <location>
        <position position="339"/>
    </location>
    <ligand>
        <name>thiamine diphosphate</name>
        <dbReference type="ChEBI" id="CHEBI:58937"/>
    </ligand>
</feature>
<feature type="binding site" evidence="2">
    <location>
        <position position="365"/>
    </location>
    <ligand>
        <name>thiamine diphosphate</name>
        <dbReference type="ChEBI" id="CHEBI:58937"/>
    </ligand>
</feature>
<feature type="binding site" evidence="3">
    <location>
        <position position="389"/>
    </location>
    <ligand>
        <name>substrate</name>
    </ligand>
</feature>
<feature type="binding site" evidence="3">
    <location>
        <position position="397"/>
    </location>
    <ligand>
        <name>substrate</name>
    </ligand>
</feature>
<feature type="binding site" evidence="3">
    <location>
        <position position="401"/>
    </location>
    <ligand>
        <name>thiamine diphosphate</name>
        <dbReference type="ChEBI" id="CHEBI:58937"/>
    </ligand>
</feature>
<feature type="sequence conflict" description="In Ref. 1; AAK31950 and 5; AAI13769." evidence="7" ref="1 5">
    <original>K</original>
    <variation>R</variation>
    <location>
        <position position="37"/>
    </location>
</feature>
<reference evidence="9" key="1">
    <citation type="journal article" date="2001" name="Nat. Genet.">
        <title>An abundance of X-linked genes expressed in spermatogonia.</title>
        <authorList>
            <person name="Wang P.J."/>
            <person name="McCarrey J.R."/>
            <person name="Yang F."/>
            <person name="Page D.C."/>
        </authorList>
    </citation>
    <scope>NUCLEOTIDE SEQUENCE [MRNA]</scope>
    <source>
        <tissue evidence="9">Testis</tissue>
    </source>
</reference>
<reference evidence="10" key="2">
    <citation type="journal article" date="2005" name="Science">
        <title>The transcriptional landscape of the mammalian genome.</title>
        <authorList>
            <person name="Carninci P."/>
            <person name="Kasukawa T."/>
            <person name="Katayama S."/>
            <person name="Gough J."/>
            <person name="Frith M.C."/>
            <person name="Maeda N."/>
            <person name="Oyama R."/>
            <person name="Ravasi T."/>
            <person name="Lenhard B."/>
            <person name="Wells C."/>
            <person name="Kodzius R."/>
            <person name="Shimokawa K."/>
            <person name="Bajic V.B."/>
            <person name="Brenner S.E."/>
            <person name="Batalov S."/>
            <person name="Forrest A.R."/>
            <person name="Zavolan M."/>
            <person name="Davis M.J."/>
            <person name="Wilming L.G."/>
            <person name="Aidinis V."/>
            <person name="Allen J.E."/>
            <person name="Ambesi-Impiombato A."/>
            <person name="Apweiler R."/>
            <person name="Aturaliya R.N."/>
            <person name="Bailey T.L."/>
            <person name="Bansal M."/>
            <person name="Baxter L."/>
            <person name="Beisel K.W."/>
            <person name="Bersano T."/>
            <person name="Bono H."/>
            <person name="Chalk A.M."/>
            <person name="Chiu K.P."/>
            <person name="Choudhary V."/>
            <person name="Christoffels A."/>
            <person name="Clutterbuck D.R."/>
            <person name="Crowe M.L."/>
            <person name="Dalla E."/>
            <person name="Dalrymple B.P."/>
            <person name="de Bono B."/>
            <person name="Della Gatta G."/>
            <person name="di Bernardo D."/>
            <person name="Down T."/>
            <person name="Engstrom P."/>
            <person name="Fagiolini M."/>
            <person name="Faulkner G."/>
            <person name="Fletcher C.F."/>
            <person name="Fukushima T."/>
            <person name="Furuno M."/>
            <person name="Futaki S."/>
            <person name="Gariboldi M."/>
            <person name="Georgii-Hemming P."/>
            <person name="Gingeras T.R."/>
            <person name="Gojobori T."/>
            <person name="Green R.E."/>
            <person name="Gustincich S."/>
            <person name="Harbers M."/>
            <person name="Hayashi Y."/>
            <person name="Hensch T.K."/>
            <person name="Hirokawa N."/>
            <person name="Hill D."/>
            <person name="Huminiecki L."/>
            <person name="Iacono M."/>
            <person name="Ikeo K."/>
            <person name="Iwama A."/>
            <person name="Ishikawa T."/>
            <person name="Jakt M."/>
            <person name="Kanapin A."/>
            <person name="Katoh M."/>
            <person name="Kawasawa Y."/>
            <person name="Kelso J."/>
            <person name="Kitamura H."/>
            <person name="Kitano H."/>
            <person name="Kollias G."/>
            <person name="Krishnan S.P."/>
            <person name="Kruger A."/>
            <person name="Kummerfeld S.K."/>
            <person name="Kurochkin I.V."/>
            <person name="Lareau L.F."/>
            <person name="Lazarevic D."/>
            <person name="Lipovich L."/>
            <person name="Liu J."/>
            <person name="Liuni S."/>
            <person name="McWilliam S."/>
            <person name="Madan Babu M."/>
            <person name="Madera M."/>
            <person name="Marchionni L."/>
            <person name="Matsuda H."/>
            <person name="Matsuzawa S."/>
            <person name="Miki H."/>
            <person name="Mignone F."/>
            <person name="Miyake S."/>
            <person name="Morris K."/>
            <person name="Mottagui-Tabar S."/>
            <person name="Mulder N."/>
            <person name="Nakano N."/>
            <person name="Nakauchi H."/>
            <person name="Ng P."/>
            <person name="Nilsson R."/>
            <person name="Nishiguchi S."/>
            <person name="Nishikawa S."/>
            <person name="Nori F."/>
            <person name="Ohara O."/>
            <person name="Okazaki Y."/>
            <person name="Orlando V."/>
            <person name="Pang K.C."/>
            <person name="Pavan W.J."/>
            <person name="Pavesi G."/>
            <person name="Pesole G."/>
            <person name="Petrovsky N."/>
            <person name="Piazza S."/>
            <person name="Reed J."/>
            <person name="Reid J.F."/>
            <person name="Ring B.Z."/>
            <person name="Ringwald M."/>
            <person name="Rost B."/>
            <person name="Ruan Y."/>
            <person name="Salzberg S.L."/>
            <person name="Sandelin A."/>
            <person name="Schneider C."/>
            <person name="Schoenbach C."/>
            <person name="Sekiguchi K."/>
            <person name="Semple C.A."/>
            <person name="Seno S."/>
            <person name="Sessa L."/>
            <person name="Sheng Y."/>
            <person name="Shibata Y."/>
            <person name="Shimada H."/>
            <person name="Shimada K."/>
            <person name="Silva D."/>
            <person name="Sinclair B."/>
            <person name="Sperling S."/>
            <person name="Stupka E."/>
            <person name="Sugiura K."/>
            <person name="Sultana R."/>
            <person name="Takenaka Y."/>
            <person name="Taki K."/>
            <person name="Tammoja K."/>
            <person name="Tan S.L."/>
            <person name="Tang S."/>
            <person name="Taylor M.S."/>
            <person name="Tegner J."/>
            <person name="Teichmann S.A."/>
            <person name="Ueda H.R."/>
            <person name="van Nimwegen E."/>
            <person name="Verardo R."/>
            <person name="Wei C.L."/>
            <person name="Yagi K."/>
            <person name="Yamanishi H."/>
            <person name="Zabarovsky E."/>
            <person name="Zhu S."/>
            <person name="Zimmer A."/>
            <person name="Hide W."/>
            <person name="Bult C."/>
            <person name="Grimmond S.M."/>
            <person name="Teasdale R.D."/>
            <person name="Liu E.T."/>
            <person name="Brusic V."/>
            <person name="Quackenbush J."/>
            <person name="Wahlestedt C."/>
            <person name="Mattick J.S."/>
            <person name="Hume D.A."/>
            <person name="Kai C."/>
            <person name="Sasaki D."/>
            <person name="Tomaru Y."/>
            <person name="Fukuda S."/>
            <person name="Kanamori-Katayama M."/>
            <person name="Suzuki M."/>
            <person name="Aoki J."/>
            <person name="Arakawa T."/>
            <person name="Iida J."/>
            <person name="Imamura K."/>
            <person name="Itoh M."/>
            <person name="Kato T."/>
            <person name="Kawaji H."/>
            <person name="Kawagashira N."/>
            <person name="Kawashima T."/>
            <person name="Kojima M."/>
            <person name="Kondo S."/>
            <person name="Konno H."/>
            <person name="Nakano K."/>
            <person name="Ninomiya N."/>
            <person name="Nishio T."/>
            <person name="Okada M."/>
            <person name="Plessy C."/>
            <person name="Shibata K."/>
            <person name="Shiraki T."/>
            <person name="Suzuki S."/>
            <person name="Tagami M."/>
            <person name="Waki K."/>
            <person name="Watahiki A."/>
            <person name="Okamura-Oho Y."/>
            <person name="Suzuki H."/>
            <person name="Kawai J."/>
            <person name="Hayashizaki Y."/>
        </authorList>
    </citation>
    <scope>NUCLEOTIDE SEQUENCE [LARGE SCALE MRNA]</scope>
    <source>
        <strain evidence="10">C57BL/6J</strain>
        <tissue evidence="11">Egg</tissue>
        <tissue evidence="10">Testis</tissue>
    </source>
</reference>
<reference key="3">
    <citation type="journal article" date="2009" name="PLoS Biol.">
        <title>Lineage-specific biology revealed by a finished genome assembly of the mouse.</title>
        <authorList>
            <person name="Church D.M."/>
            <person name="Goodstadt L."/>
            <person name="Hillier L.W."/>
            <person name="Zody M.C."/>
            <person name="Goldstein S."/>
            <person name="She X."/>
            <person name="Bult C.J."/>
            <person name="Agarwala R."/>
            <person name="Cherry J.L."/>
            <person name="DiCuccio M."/>
            <person name="Hlavina W."/>
            <person name="Kapustin Y."/>
            <person name="Meric P."/>
            <person name="Maglott D."/>
            <person name="Birtle Z."/>
            <person name="Marques A.C."/>
            <person name="Graves T."/>
            <person name="Zhou S."/>
            <person name="Teague B."/>
            <person name="Potamousis K."/>
            <person name="Churas C."/>
            <person name="Place M."/>
            <person name="Herschleb J."/>
            <person name="Runnheim R."/>
            <person name="Forrest D."/>
            <person name="Amos-Landgraf J."/>
            <person name="Schwartz D.C."/>
            <person name="Cheng Z."/>
            <person name="Lindblad-Toh K."/>
            <person name="Eichler E.E."/>
            <person name="Ponting C.P."/>
        </authorList>
    </citation>
    <scope>NUCLEOTIDE SEQUENCE [LARGE SCALE GENOMIC DNA]</scope>
    <source>
        <strain>C57BL/6J</strain>
    </source>
</reference>
<reference evidence="12" key="4">
    <citation type="submission" date="2005-07" db="EMBL/GenBank/DDBJ databases">
        <authorList>
            <person name="Mural R.J."/>
            <person name="Adams M.D."/>
            <person name="Myers E.W."/>
            <person name="Smith H.O."/>
            <person name="Venter J.C."/>
        </authorList>
    </citation>
    <scope>NUCLEOTIDE SEQUENCE [LARGE SCALE GENOMIC DNA]</scope>
</reference>
<reference evidence="8" key="5">
    <citation type="journal article" date="2004" name="Genome Res.">
        <title>The status, quality, and expansion of the NIH full-length cDNA project: the Mammalian Gene Collection (MGC).</title>
        <authorList>
            <consortium name="The MGC Project Team"/>
        </authorList>
    </citation>
    <scope>NUCLEOTIDE SEQUENCE [LARGE SCALE MRNA]</scope>
</reference>
<reference evidence="12" key="6">
    <citation type="submission" date="2004-02" db="EMBL/GenBank/DDBJ databases">
        <title>Towards functional annotation of all Xq28 genes: expression and intracellular localization analyses reveal novel candidates for disease genes.</title>
        <authorList>
            <person name="Kolb A.A."/>
            <person name="Mehrle A."/>
            <person name="Bechtel S."/>
            <person name="Wellenreuther R."/>
            <person name="Simpson J."/>
            <person name="Pepperkok R."/>
            <person name="Wiemann S."/>
            <person name="Poustka A."/>
        </authorList>
    </citation>
    <scope>NUCLEOTIDE SEQUENCE [MRNA] OF 361-595</scope>
    <source>
        <strain evidence="12">NMRI</strain>
        <tissue evidence="12">Testis</tissue>
    </source>
</reference>
<reference key="7">
    <citation type="journal article" date="2010" name="Cell">
        <title>A tissue-specific atlas of mouse protein phosphorylation and expression.</title>
        <authorList>
            <person name="Huttlin E.L."/>
            <person name="Jedrychowski M.P."/>
            <person name="Elias J.E."/>
            <person name="Goswami T."/>
            <person name="Rad R."/>
            <person name="Beausoleil S.A."/>
            <person name="Villen J."/>
            <person name="Haas W."/>
            <person name="Sowa M.E."/>
            <person name="Gygi S.P."/>
        </authorList>
    </citation>
    <scope>IDENTIFICATION BY MASS SPECTROMETRY [LARGE SCALE ANALYSIS]</scope>
    <source>
        <tissue>Testis</tissue>
    </source>
</reference>
<reference key="8">
    <citation type="journal article" date="2022" name="Science">
        <title>Human TKTL1 implies greater neurogenesis in frontal neocortex of modern humans than Neanderthals.</title>
        <authorList>
            <person name="Pinson A."/>
            <person name="Xing L."/>
            <person name="Namba T."/>
            <person name="Kalebic N."/>
            <person name="Peters J."/>
            <person name="Oegema C.E."/>
            <person name="Traikov S."/>
            <person name="Reppe K."/>
            <person name="Riesenberg S."/>
            <person name="Maricic T."/>
            <person name="Derihaci R."/>
            <person name="Wimberger P."/>
            <person name="Paeaebo S."/>
            <person name="Huttner W.B."/>
        </authorList>
    </citation>
    <scope>TISSUE SPECIFICITY</scope>
</reference>
<organism>
    <name type="scientific">Mus musculus</name>
    <name type="common">Mouse</name>
    <dbReference type="NCBI Taxonomy" id="10090"/>
    <lineage>
        <taxon>Eukaryota</taxon>
        <taxon>Metazoa</taxon>
        <taxon>Chordata</taxon>
        <taxon>Craniata</taxon>
        <taxon>Vertebrata</taxon>
        <taxon>Euteleostomi</taxon>
        <taxon>Mammalia</taxon>
        <taxon>Eutheria</taxon>
        <taxon>Euarchontoglires</taxon>
        <taxon>Glires</taxon>
        <taxon>Rodentia</taxon>
        <taxon>Myomorpha</taxon>
        <taxon>Muroidea</taxon>
        <taxon>Muridae</taxon>
        <taxon>Murinae</taxon>
        <taxon>Mus</taxon>
        <taxon>Mus</taxon>
    </lineage>
</organism>
<evidence type="ECO:0000250" key="1"/>
<evidence type="ECO:0000250" key="2">
    <source>
        <dbReference type="UniProtKB" id="P23254"/>
    </source>
</evidence>
<evidence type="ECO:0000250" key="3">
    <source>
        <dbReference type="UniProtKB" id="P27302"/>
    </source>
</evidence>
<evidence type="ECO:0000250" key="4">
    <source>
        <dbReference type="UniProtKB" id="P51854"/>
    </source>
</evidence>
<evidence type="ECO:0000255" key="5"/>
<evidence type="ECO:0000269" key="6">
    <source>
    </source>
</evidence>
<evidence type="ECO:0000305" key="7"/>
<evidence type="ECO:0000312" key="8">
    <source>
        <dbReference type="EMBL" id="AAI13769.1"/>
    </source>
</evidence>
<evidence type="ECO:0000312" key="9">
    <source>
        <dbReference type="EMBL" id="AAK31950.1"/>
    </source>
</evidence>
<evidence type="ECO:0000312" key="10">
    <source>
        <dbReference type="EMBL" id="BAC26508.1"/>
    </source>
</evidence>
<evidence type="ECO:0000312" key="11">
    <source>
        <dbReference type="EMBL" id="BAE24155.1"/>
    </source>
</evidence>
<evidence type="ECO:0000312" key="12">
    <source>
        <dbReference type="EMBL" id="CAF25311.1"/>
    </source>
</evidence>
<evidence type="ECO:0000312" key="13">
    <source>
        <dbReference type="MGI" id="MGI:1933244"/>
    </source>
</evidence>
<comment type="function">
    <text evidence="2">Catalyzes the transfer of a two-carbon ketol group from a ketose donor to an aldose acceptor, via a covalent intermediate with the cofactor thiamine pyrophosphate.</text>
</comment>
<comment type="catalytic activity">
    <reaction evidence="4">
        <text>D-sedoheptulose 7-phosphate + D-glyceraldehyde 3-phosphate = aldehydo-D-ribose 5-phosphate + D-xylulose 5-phosphate</text>
        <dbReference type="Rhea" id="RHEA:10508"/>
        <dbReference type="ChEBI" id="CHEBI:57483"/>
        <dbReference type="ChEBI" id="CHEBI:57737"/>
        <dbReference type="ChEBI" id="CHEBI:58273"/>
        <dbReference type="ChEBI" id="CHEBI:59776"/>
        <dbReference type="EC" id="2.2.1.1"/>
    </reaction>
    <physiologicalReaction direction="right-to-left" evidence="4">
        <dbReference type="Rhea" id="RHEA:10510"/>
    </physiologicalReaction>
</comment>
<comment type="cofactor">
    <cofactor evidence="2">
        <name>Mg(2+)</name>
        <dbReference type="ChEBI" id="CHEBI:18420"/>
    </cofactor>
    <cofactor evidence="2">
        <name>Ca(2+)</name>
        <dbReference type="ChEBI" id="CHEBI:29108"/>
    </cofactor>
    <cofactor evidence="2">
        <name>Mn(2+)</name>
        <dbReference type="ChEBI" id="CHEBI:29035"/>
    </cofactor>
    <cofactor evidence="2">
        <name>Co(2+)</name>
        <dbReference type="ChEBI" id="CHEBI:48828"/>
    </cofactor>
    <text evidence="2">Binds 1 Mg(2+) ion per subunit. Can also utilize other divalent metal cations, such as Ca(2+), Mn(2+) and Co(2+).</text>
</comment>
<comment type="cofactor">
    <cofactor evidence="2">
        <name>thiamine diphosphate</name>
        <dbReference type="ChEBI" id="CHEBI:58937"/>
    </cofactor>
    <text evidence="2">Binds 1 thiamine pyrophosphate per subunit.</text>
</comment>
<comment type="subunit">
    <text evidence="2">Homodimer.</text>
</comment>
<comment type="subcellular location">
    <subcellularLocation>
        <location evidence="4">Cytoplasm</location>
    </subcellularLocation>
</comment>
<comment type="tissue specificity">
    <text evidence="6">Not expressed in the embryonic neocortex.</text>
</comment>
<comment type="similarity">
    <text evidence="5">Belongs to the transketolase family.</text>
</comment>
<protein>
    <recommendedName>
        <fullName>Transketolase-like protein 1</fullName>
        <ecNumber evidence="4">2.2.1.1</ecNumber>
    </recommendedName>
    <alternativeName>
        <fullName>Transketolase 2</fullName>
        <shortName>TK 2</shortName>
    </alternativeName>
</protein>
<name>TKTL1_MOUSE</name>
<sequence length="595" mass="65245">MSEAEASSGMAHNAGPDEKTLQVLRDMANRLRIRSIKATNSSTTSYLIPCSNAEIMSVLFFYTMRYKQEDPENPDNDRCILSKGLPFVNVATGWPGQGLGAACGMAYTGKYFDQASYRVFCLLGDEESTEGSVWEAFAFASYYNLDNLMAIFDVNRIGHSSSMSVEHCIAIYQKRCEAFGWNTYVVDGRDVKTLCHVFSQAAQVRGKPTAVVAKTFKARGMPNVEDAESWYGRPMPKERADAIVKLIESQIQTNKILVPSPPIEDSPQINIMNICMTSPPVYVADDKVSTQRACGLALAKLGHENDRVIVLGSDTKNCNFSDIFKKEHPERFIQCCIAEQNMVNVALGCSTRDRTIVFAYSFAAFFTRAFDQIRLGAISQININLIGCHCGVSTGDDNPYHMALEDLAMFRAIPNCVVFYPSDAVSTEHAVYLAANTKEMCFIRTSQAETAIIYTTQETFQIGQAKVVRHSDNDKVIVIGAGVTLHEALVAAAELSKEDISIRVIDLFTIKPLDIATIISNAKATGGRIITVEDHYPEGGIGGAVCAAVSMEPNIVVHNLAVMDVPRSGRCNEALDFSGISSRHIIVAVKCILMT</sequence>
<dbReference type="EC" id="2.2.1.1" evidence="4"/>
<dbReference type="EMBL" id="AF285571">
    <property type="protein sequence ID" value="AAK31950.1"/>
    <property type="molecule type" value="mRNA"/>
</dbReference>
<dbReference type="EMBL" id="AK029546">
    <property type="protein sequence ID" value="BAC26508.1"/>
    <property type="molecule type" value="mRNA"/>
</dbReference>
<dbReference type="EMBL" id="AK139841">
    <property type="protein sequence ID" value="BAE24155.1"/>
    <property type="molecule type" value="mRNA"/>
</dbReference>
<dbReference type="EMBL" id="AL928731">
    <property type="status" value="NOT_ANNOTATED_CDS"/>
    <property type="molecule type" value="Genomic_DNA"/>
</dbReference>
<dbReference type="EMBL" id="CH466650">
    <property type="protein sequence ID" value="EDL29841.1"/>
    <property type="molecule type" value="Genomic_DNA"/>
</dbReference>
<dbReference type="EMBL" id="BC113768">
    <property type="protein sequence ID" value="AAI13769.1"/>
    <property type="molecule type" value="mRNA"/>
</dbReference>
<dbReference type="EMBL" id="AJ627042">
    <property type="protein sequence ID" value="CAF25311.1"/>
    <property type="molecule type" value="mRNA"/>
</dbReference>
<dbReference type="CCDS" id="CCDS30221.1"/>
<dbReference type="RefSeq" id="NP_113556.2">
    <property type="nucleotide sequence ID" value="NM_031379.2"/>
</dbReference>
<dbReference type="SMR" id="Q99MX0"/>
<dbReference type="BioGRID" id="219939">
    <property type="interactions" value="1"/>
</dbReference>
<dbReference type="FunCoup" id="Q99MX0">
    <property type="interactions" value="460"/>
</dbReference>
<dbReference type="STRING" id="10090.ENSMUSP00000010127"/>
<dbReference type="iPTMnet" id="Q99MX0"/>
<dbReference type="PhosphoSitePlus" id="Q99MX0"/>
<dbReference type="SwissPalm" id="Q99MX0"/>
<dbReference type="PaxDb" id="10090-ENSMUSP00000010127"/>
<dbReference type="PeptideAtlas" id="Q99MX0"/>
<dbReference type="ProteomicsDB" id="262823"/>
<dbReference type="Antibodypedia" id="17549">
    <property type="antibodies" value="68 antibodies from 23 providers"/>
</dbReference>
<dbReference type="DNASU" id="83553"/>
<dbReference type="Ensembl" id="ENSMUST00000010127.12">
    <property type="protein sequence ID" value="ENSMUSP00000010127.6"/>
    <property type="gene ID" value="ENSMUSG00000031397.12"/>
</dbReference>
<dbReference type="GeneID" id="83553"/>
<dbReference type="KEGG" id="mmu:83553"/>
<dbReference type="UCSC" id="uc009tnx.1">
    <property type="organism name" value="mouse"/>
</dbReference>
<dbReference type="AGR" id="MGI:1933244"/>
<dbReference type="CTD" id="8277"/>
<dbReference type="MGI" id="MGI:1933244">
    <property type="gene designation" value="Tktl1"/>
</dbReference>
<dbReference type="VEuPathDB" id="HostDB:ENSMUSG00000031397"/>
<dbReference type="eggNOG" id="KOG0523">
    <property type="taxonomic scope" value="Eukaryota"/>
</dbReference>
<dbReference type="GeneTree" id="ENSGT00940000162426"/>
<dbReference type="HOGENOM" id="CLU_009227_3_0_1"/>
<dbReference type="InParanoid" id="Q99MX0"/>
<dbReference type="OMA" id="TEGSVWE"/>
<dbReference type="OrthoDB" id="10267175at2759"/>
<dbReference type="PhylomeDB" id="Q99MX0"/>
<dbReference type="TreeFam" id="TF313097"/>
<dbReference type="BioGRID-ORCS" id="83553">
    <property type="hits" value="0 hits in 78 CRISPR screens"/>
</dbReference>
<dbReference type="PRO" id="PR:Q99MX0"/>
<dbReference type="Proteomes" id="UP000000589">
    <property type="component" value="Chromosome X"/>
</dbReference>
<dbReference type="RNAct" id="Q99MX0">
    <property type="molecule type" value="protein"/>
</dbReference>
<dbReference type="Bgee" id="ENSMUSG00000031397">
    <property type="expression patterns" value="Expressed in cleaving embryo and 37 other cell types or tissues"/>
</dbReference>
<dbReference type="ExpressionAtlas" id="Q99MX0">
    <property type="expression patterns" value="baseline and differential"/>
</dbReference>
<dbReference type="GO" id="GO:0005829">
    <property type="term" value="C:cytosol"/>
    <property type="evidence" value="ECO:0007669"/>
    <property type="project" value="Ensembl"/>
</dbReference>
<dbReference type="GO" id="GO:0046872">
    <property type="term" value="F:metal ion binding"/>
    <property type="evidence" value="ECO:0007669"/>
    <property type="project" value="UniProtKB-KW"/>
</dbReference>
<dbReference type="GO" id="GO:0004802">
    <property type="term" value="F:transketolase activity"/>
    <property type="evidence" value="ECO:0007669"/>
    <property type="project" value="UniProtKB-EC"/>
</dbReference>
<dbReference type="CDD" id="cd07033">
    <property type="entry name" value="TPP_PYR_DXS_TK_like"/>
    <property type="match status" value="1"/>
</dbReference>
<dbReference type="FunFam" id="3.40.50.970:FF:000129">
    <property type="entry name" value="Transketolase"/>
    <property type="match status" value="1"/>
</dbReference>
<dbReference type="Gene3D" id="3.40.50.920">
    <property type="match status" value="1"/>
</dbReference>
<dbReference type="Gene3D" id="3.40.50.970">
    <property type="match status" value="2"/>
</dbReference>
<dbReference type="InterPro" id="IPR029061">
    <property type="entry name" value="THDP-binding"/>
</dbReference>
<dbReference type="InterPro" id="IPR009014">
    <property type="entry name" value="Transketo_C/PFOR_II"/>
</dbReference>
<dbReference type="InterPro" id="IPR051424">
    <property type="entry name" value="Transketolase-like"/>
</dbReference>
<dbReference type="InterPro" id="IPR005475">
    <property type="entry name" value="Transketolase-like_Pyr-bd"/>
</dbReference>
<dbReference type="InterPro" id="IPR033248">
    <property type="entry name" value="Transketolase_C"/>
</dbReference>
<dbReference type="InterPro" id="IPR005474">
    <property type="entry name" value="Transketolase_N"/>
</dbReference>
<dbReference type="NCBIfam" id="NF004559">
    <property type="entry name" value="PRK05899.2-5"/>
    <property type="match status" value="1"/>
</dbReference>
<dbReference type="PANTHER" id="PTHR43195">
    <property type="entry name" value="TRANSKETOLASE"/>
    <property type="match status" value="1"/>
</dbReference>
<dbReference type="PANTHER" id="PTHR43195:SF2">
    <property type="entry name" value="TRANSKETOLASE-LIKE PROTEIN 1"/>
    <property type="match status" value="1"/>
</dbReference>
<dbReference type="Pfam" id="PF02779">
    <property type="entry name" value="Transket_pyr"/>
    <property type="match status" value="1"/>
</dbReference>
<dbReference type="Pfam" id="PF02780">
    <property type="entry name" value="Transketolase_C"/>
    <property type="match status" value="1"/>
</dbReference>
<dbReference type="Pfam" id="PF00456">
    <property type="entry name" value="Transketolase_N"/>
    <property type="match status" value="1"/>
</dbReference>
<dbReference type="SMART" id="SM00861">
    <property type="entry name" value="Transket_pyr"/>
    <property type="match status" value="1"/>
</dbReference>
<dbReference type="SUPFAM" id="SSF52518">
    <property type="entry name" value="Thiamin diphosphate-binding fold (THDP-binding)"/>
    <property type="match status" value="2"/>
</dbReference>
<dbReference type="SUPFAM" id="SSF52922">
    <property type="entry name" value="TK C-terminal domain-like"/>
    <property type="match status" value="1"/>
</dbReference>
<proteinExistence type="evidence at protein level"/>
<gene>
    <name evidence="13" type="primary">Tktl1</name>
</gene>
<keyword id="KW-0106">Calcium</keyword>
<keyword id="KW-0963">Cytoplasm</keyword>
<keyword id="KW-0460">Magnesium</keyword>
<keyword id="KW-0479">Metal-binding</keyword>
<keyword id="KW-1185">Reference proteome</keyword>
<keyword id="KW-0786">Thiamine pyrophosphate</keyword>
<keyword id="KW-0808">Transferase</keyword>